<proteinExistence type="inferred from homology"/>
<reference key="1">
    <citation type="journal article" date="2008" name="J. Bacteriol.">
        <title>The pangenome structure of Escherichia coli: comparative genomic analysis of E. coli commensal and pathogenic isolates.</title>
        <authorList>
            <person name="Rasko D.A."/>
            <person name="Rosovitz M.J."/>
            <person name="Myers G.S.A."/>
            <person name="Mongodin E.F."/>
            <person name="Fricke W.F."/>
            <person name="Gajer P."/>
            <person name="Crabtree J."/>
            <person name="Sebaihia M."/>
            <person name="Thomson N.R."/>
            <person name="Chaudhuri R."/>
            <person name="Henderson I.R."/>
            <person name="Sperandio V."/>
            <person name="Ravel J."/>
        </authorList>
    </citation>
    <scope>NUCLEOTIDE SEQUENCE [LARGE SCALE GENOMIC DNA]</scope>
    <source>
        <strain>HS</strain>
    </source>
</reference>
<sequence length="138" mass="15800">MALLPDKEKLLRNFLRCANWEEKYLYIIELGQRLPELRDEDRSPQNSIQGCQSQVWIVMRQNAQGIIELQGDSDAAIVKGLIAVVFILYDQMTPQDIVNFDVRPWFEKMALTQHLTPSRSQGLEAMIRAIRAKAAALS</sequence>
<organism>
    <name type="scientific">Escherichia coli O9:H4 (strain HS)</name>
    <dbReference type="NCBI Taxonomy" id="331112"/>
    <lineage>
        <taxon>Bacteria</taxon>
        <taxon>Pseudomonadati</taxon>
        <taxon>Pseudomonadota</taxon>
        <taxon>Gammaproteobacteria</taxon>
        <taxon>Enterobacterales</taxon>
        <taxon>Enterobacteriaceae</taxon>
        <taxon>Escherichia</taxon>
    </lineage>
</organism>
<comment type="function">
    <text evidence="1">Participates in cysteine desulfuration mediated by SufS. Cysteine desulfuration mobilizes sulfur from L-cysteine to yield L-alanine and constitutes an essential step in sulfur metabolism for biosynthesis of a variety of sulfur-containing biomolecules. Functions as a sulfur acceptor for SufS, by mediating the direct transfer of the sulfur atom from the S-sulfanylcysteine of SufS, an intermediate product of cysteine desulfuration process.</text>
</comment>
<comment type="pathway">
    <text evidence="1">Cofactor biosynthesis; iron-sulfur cluster biosynthesis.</text>
</comment>
<comment type="subunit">
    <text evidence="1">Homodimer. Interacts with SufS.</text>
</comment>
<comment type="subcellular location">
    <subcellularLocation>
        <location evidence="1">Cytoplasm</location>
    </subcellularLocation>
</comment>
<comment type="similarity">
    <text evidence="1">Belongs to the SufE family.</text>
</comment>
<evidence type="ECO:0000255" key="1">
    <source>
        <dbReference type="HAMAP-Rule" id="MF_01832"/>
    </source>
</evidence>
<accession>A8A0M5</accession>
<keyword id="KW-0963">Cytoplasm</keyword>
<dbReference type="EMBL" id="CP000802">
    <property type="protein sequence ID" value="ABV06079.1"/>
    <property type="molecule type" value="Genomic_DNA"/>
</dbReference>
<dbReference type="RefSeq" id="WP_001196530.1">
    <property type="nucleotide sequence ID" value="NC_009800.1"/>
</dbReference>
<dbReference type="SMR" id="A8A0M5"/>
<dbReference type="KEGG" id="ecx:EcHS_A1760"/>
<dbReference type="HOGENOM" id="CLU_124502_1_1_6"/>
<dbReference type="UniPathway" id="UPA00266"/>
<dbReference type="GO" id="GO:0005737">
    <property type="term" value="C:cytoplasm"/>
    <property type="evidence" value="ECO:0007669"/>
    <property type="project" value="UniProtKB-SubCell"/>
</dbReference>
<dbReference type="GO" id="GO:0016226">
    <property type="term" value="P:iron-sulfur cluster assembly"/>
    <property type="evidence" value="ECO:0007669"/>
    <property type="project" value="InterPro"/>
</dbReference>
<dbReference type="GO" id="GO:0006790">
    <property type="term" value="P:sulfur compound metabolic process"/>
    <property type="evidence" value="ECO:0007669"/>
    <property type="project" value="InterPro"/>
</dbReference>
<dbReference type="FunFam" id="3.90.1010.10:FF:000004">
    <property type="entry name" value="Cysteine desulfuration protein SufE"/>
    <property type="match status" value="1"/>
</dbReference>
<dbReference type="Gene3D" id="3.90.1010.10">
    <property type="match status" value="1"/>
</dbReference>
<dbReference type="HAMAP" id="MF_01832">
    <property type="entry name" value="SufE"/>
    <property type="match status" value="1"/>
</dbReference>
<dbReference type="InterPro" id="IPR023939">
    <property type="entry name" value="Cysteine_desulfuration_SufE"/>
</dbReference>
<dbReference type="InterPro" id="IPR003808">
    <property type="entry name" value="Fe-S_metab-assoc_dom"/>
</dbReference>
<dbReference type="NCBIfam" id="NF006792">
    <property type="entry name" value="PRK09296.1"/>
    <property type="match status" value="1"/>
</dbReference>
<dbReference type="PANTHER" id="PTHR43597:SF3">
    <property type="entry name" value="CYSTEINE DESULFURATION PROTEIN SUFE"/>
    <property type="match status" value="1"/>
</dbReference>
<dbReference type="PANTHER" id="PTHR43597">
    <property type="entry name" value="SULFUR ACCEPTOR PROTEIN CSDE"/>
    <property type="match status" value="1"/>
</dbReference>
<dbReference type="Pfam" id="PF02657">
    <property type="entry name" value="SufE"/>
    <property type="match status" value="1"/>
</dbReference>
<dbReference type="SUPFAM" id="SSF82649">
    <property type="entry name" value="SufE/NifU"/>
    <property type="match status" value="1"/>
</dbReference>
<gene>
    <name evidence="1" type="primary">sufE</name>
    <name type="ordered locus">EcHS_A1760</name>
</gene>
<protein>
    <recommendedName>
        <fullName evidence="1">Cysteine desulfuration protein SufE</fullName>
    </recommendedName>
</protein>
<name>SUFE_ECOHS</name>
<feature type="chain" id="PRO_1000070437" description="Cysteine desulfuration protein SufE">
    <location>
        <begin position="1"/>
        <end position="138"/>
    </location>
</feature>
<feature type="active site" description="Cysteine persulfide intermediate" evidence="1">
    <location>
        <position position="51"/>
    </location>
</feature>